<name>RGI1_VANPO</name>
<organism>
    <name type="scientific">Vanderwaltozyma polyspora (strain ATCC 22028 / DSM 70294 / BCRC 21397 / CBS 2163 / NBRC 10782 / NRRL Y-8283 / UCD 57-17)</name>
    <name type="common">Kluyveromyces polysporus</name>
    <dbReference type="NCBI Taxonomy" id="436907"/>
    <lineage>
        <taxon>Eukaryota</taxon>
        <taxon>Fungi</taxon>
        <taxon>Dikarya</taxon>
        <taxon>Ascomycota</taxon>
        <taxon>Saccharomycotina</taxon>
        <taxon>Saccharomycetes</taxon>
        <taxon>Saccharomycetales</taxon>
        <taxon>Saccharomycetaceae</taxon>
        <taxon>Vanderwaltozyma</taxon>
    </lineage>
</organism>
<sequence length="164" mass="19331">MTKKDKKPKVATITTKSGETLKVFEDLAQFEDFLKHETEDDDDFDNVHCQLKYYPPFVLHEAHDDPEKIKDTANSHSKKYVRHLHQHVEKHLLKEIKEALQLPDLKFKDKSKDEDFEKIVWNYGDTGEFHDRKFRISISVTCKHDDAMVDLDYKTVPLTEESVI</sequence>
<protein>
    <recommendedName>
        <fullName>Respiratory growth induced protein 1</fullName>
    </recommendedName>
</protein>
<keyword id="KW-1003">Cell membrane</keyword>
<keyword id="KW-0472">Membrane</keyword>
<keyword id="KW-1185">Reference proteome</keyword>
<reference key="1">
    <citation type="journal article" date="2007" name="Proc. Natl. Acad. Sci. U.S.A.">
        <title>Independent sorting-out of thousands of duplicated gene pairs in two yeast species descended from a whole-genome duplication.</title>
        <authorList>
            <person name="Scannell D.R."/>
            <person name="Frank A.C."/>
            <person name="Conant G.C."/>
            <person name="Byrne K.P."/>
            <person name="Woolfit M."/>
            <person name="Wolfe K.H."/>
        </authorList>
    </citation>
    <scope>NUCLEOTIDE SEQUENCE [LARGE SCALE GENOMIC DNA]</scope>
    <source>
        <strain>ATCC 22028 / DSM 70294 / BCRC 21397 / CBS 2163 / NBRC 10782 / NRRL Y-8283 / UCD 57-17</strain>
    </source>
</reference>
<gene>
    <name type="primary">RGI1</name>
    <name type="ORF">Kpol_411p18</name>
</gene>
<feature type="chain" id="PRO_0000402292" description="Respiratory growth induced protein 1">
    <location>
        <begin position="1"/>
        <end position="164"/>
    </location>
</feature>
<proteinExistence type="inferred from homology"/>
<evidence type="ECO:0000250" key="1"/>
<evidence type="ECO:0000305" key="2"/>
<accession>A7TRQ1</accession>
<dbReference type="EMBL" id="DS480484">
    <property type="protein sequence ID" value="EDO15073.1"/>
    <property type="molecule type" value="Genomic_DNA"/>
</dbReference>
<dbReference type="RefSeq" id="XP_001642931.1">
    <property type="nucleotide sequence ID" value="XM_001642881.1"/>
</dbReference>
<dbReference type="SMR" id="A7TRQ1"/>
<dbReference type="FunCoup" id="A7TRQ1">
    <property type="interactions" value="73"/>
</dbReference>
<dbReference type="GeneID" id="5543108"/>
<dbReference type="KEGG" id="vpo:Kpol_411p18"/>
<dbReference type="eggNOG" id="ENOG502RZ9F">
    <property type="taxonomic scope" value="Eukaryota"/>
</dbReference>
<dbReference type="HOGENOM" id="CLU_118207_0_0_1"/>
<dbReference type="InParanoid" id="A7TRQ1"/>
<dbReference type="OMA" id="HLKYYPP"/>
<dbReference type="OrthoDB" id="4082176at2759"/>
<dbReference type="PhylomeDB" id="A7TRQ1"/>
<dbReference type="Proteomes" id="UP000000267">
    <property type="component" value="Unassembled WGS sequence"/>
</dbReference>
<dbReference type="GO" id="GO:0005886">
    <property type="term" value="C:plasma membrane"/>
    <property type="evidence" value="ECO:0007669"/>
    <property type="project" value="UniProtKB-SubCell"/>
</dbReference>
<dbReference type="GO" id="GO:0006112">
    <property type="term" value="P:energy reserve metabolic process"/>
    <property type="evidence" value="ECO:0007669"/>
    <property type="project" value="InterPro"/>
</dbReference>
<dbReference type="Gene3D" id="3.40.1000.40">
    <property type="entry name" value="Respiratory growth induced protein 1"/>
    <property type="match status" value="1"/>
</dbReference>
<dbReference type="InterPro" id="IPR022554">
    <property type="entry name" value="RGI1"/>
</dbReference>
<dbReference type="InterPro" id="IPR038235">
    <property type="entry name" value="RGI1_sf"/>
</dbReference>
<dbReference type="Pfam" id="PF10843">
    <property type="entry name" value="RGI1"/>
    <property type="match status" value="1"/>
</dbReference>
<comment type="function">
    <text evidence="1">Involved in the control of energetic metabolism and significantly contribute to cell fitness, especially under respiratory growth conditions.</text>
</comment>
<comment type="subcellular location">
    <subcellularLocation>
        <location evidence="1">Cell membrane</location>
        <topology evidence="1">Peripheral membrane protein</topology>
    </subcellularLocation>
</comment>
<comment type="similarity">
    <text evidence="2">Belongs to the RGI1 family.</text>
</comment>